<sequence>MKSLLAIYPGSIVSEELCIREGCLCFFDESNQRYISIPKTEISEKEVLVLQSFLTPADEGNQLSMKSPEENKWFSFLFSRGELPAYIKKRTRFVHFHLFGKIERTSFTEAVRHFWPVSFVIVWIHEDRGVIVEQESEAAAEKDELESLAKVLESDFYFSVRFYAGRFYEPDECLRKHYAREQAYFLFAEKRLPQVQSVTFEMIFPFLLLETEKEKLETLLSEEAELLFGSESELRKTIKLFIENNSNVTLTAKKLHLHRNSLQYRIDKFIERSGIDIKSYKGALLAYFICLQNESSE</sequence>
<proteinExistence type="predicted"/>
<gene>
    <name type="primary">yxkF</name>
    <name type="ordered locus">BSU38820</name>
</gene>
<evidence type="ECO:0000255" key="1"/>
<organism>
    <name type="scientific">Bacillus subtilis (strain 168)</name>
    <dbReference type="NCBI Taxonomy" id="224308"/>
    <lineage>
        <taxon>Bacteria</taxon>
        <taxon>Bacillati</taxon>
        <taxon>Bacillota</taxon>
        <taxon>Bacilli</taxon>
        <taxon>Bacillales</taxon>
        <taxon>Bacillaceae</taxon>
        <taxon>Bacillus</taxon>
    </lineage>
</organism>
<name>YXKF_BACSU</name>
<protein>
    <recommendedName>
        <fullName>Uncharacterized protein YxkF</fullName>
    </recommendedName>
</protein>
<keyword id="KW-0175">Coiled coil</keyword>
<keyword id="KW-1185">Reference proteome</keyword>
<feature type="chain" id="PRO_0000378469" description="Uncharacterized protein YxkF">
    <location>
        <begin position="1"/>
        <end position="297"/>
    </location>
</feature>
<feature type="coiled-coil region" evidence="1">
    <location>
        <begin position="128"/>
        <end position="156"/>
    </location>
</feature>
<reference key="1">
    <citation type="journal article" date="1996" name="Microbiology">
        <title>Sequencing of a 65 kb region of the Bacillus subtilis genome containing the lic and cel loci, and creation of a 177 kb contig covering the gnt-sacXY region.</title>
        <authorList>
            <person name="Yoshida K."/>
            <person name="Shindo K."/>
            <person name="Sano H."/>
            <person name="Seki S."/>
            <person name="Fujimura M."/>
            <person name="Yanai N."/>
            <person name="Miwa Y."/>
            <person name="Fujita Y."/>
        </authorList>
    </citation>
    <scope>NUCLEOTIDE SEQUENCE [GENOMIC DNA]</scope>
    <source>
        <strain>168 / BGSC1A1</strain>
    </source>
</reference>
<reference key="2">
    <citation type="journal article" date="1997" name="Nature">
        <title>The complete genome sequence of the Gram-positive bacterium Bacillus subtilis.</title>
        <authorList>
            <person name="Kunst F."/>
            <person name="Ogasawara N."/>
            <person name="Moszer I."/>
            <person name="Albertini A.M."/>
            <person name="Alloni G."/>
            <person name="Azevedo V."/>
            <person name="Bertero M.G."/>
            <person name="Bessieres P."/>
            <person name="Bolotin A."/>
            <person name="Borchert S."/>
            <person name="Borriss R."/>
            <person name="Boursier L."/>
            <person name="Brans A."/>
            <person name="Braun M."/>
            <person name="Brignell S.C."/>
            <person name="Bron S."/>
            <person name="Brouillet S."/>
            <person name="Bruschi C.V."/>
            <person name="Caldwell B."/>
            <person name="Capuano V."/>
            <person name="Carter N.M."/>
            <person name="Choi S.-K."/>
            <person name="Codani J.-J."/>
            <person name="Connerton I.F."/>
            <person name="Cummings N.J."/>
            <person name="Daniel R.A."/>
            <person name="Denizot F."/>
            <person name="Devine K.M."/>
            <person name="Duesterhoeft A."/>
            <person name="Ehrlich S.D."/>
            <person name="Emmerson P.T."/>
            <person name="Entian K.-D."/>
            <person name="Errington J."/>
            <person name="Fabret C."/>
            <person name="Ferrari E."/>
            <person name="Foulger D."/>
            <person name="Fritz C."/>
            <person name="Fujita M."/>
            <person name="Fujita Y."/>
            <person name="Fuma S."/>
            <person name="Galizzi A."/>
            <person name="Galleron N."/>
            <person name="Ghim S.-Y."/>
            <person name="Glaser P."/>
            <person name="Goffeau A."/>
            <person name="Golightly E.J."/>
            <person name="Grandi G."/>
            <person name="Guiseppi G."/>
            <person name="Guy B.J."/>
            <person name="Haga K."/>
            <person name="Haiech J."/>
            <person name="Harwood C.R."/>
            <person name="Henaut A."/>
            <person name="Hilbert H."/>
            <person name="Holsappel S."/>
            <person name="Hosono S."/>
            <person name="Hullo M.-F."/>
            <person name="Itaya M."/>
            <person name="Jones L.-M."/>
            <person name="Joris B."/>
            <person name="Karamata D."/>
            <person name="Kasahara Y."/>
            <person name="Klaerr-Blanchard M."/>
            <person name="Klein C."/>
            <person name="Kobayashi Y."/>
            <person name="Koetter P."/>
            <person name="Koningstein G."/>
            <person name="Krogh S."/>
            <person name="Kumano M."/>
            <person name="Kurita K."/>
            <person name="Lapidus A."/>
            <person name="Lardinois S."/>
            <person name="Lauber J."/>
            <person name="Lazarevic V."/>
            <person name="Lee S.-M."/>
            <person name="Levine A."/>
            <person name="Liu H."/>
            <person name="Masuda S."/>
            <person name="Mauel C."/>
            <person name="Medigue C."/>
            <person name="Medina N."/>
            <person name="Mellado R.P."/>
            <person name="Mizuno M."/>
            <person name="Moestl D."/>
            <person name="Nakai S."/>
            <person name="Noback M."/>
            <person name="Noone D."/>
            <person name="O'Reilly M."/>
            <person name="Ogawa K."/>
            <person name="Ogiwara A."/>
            <person name="Oudega B."/>
            <person name="Park S.-H."/>
            <person name="Parro V."/>
            <person name="Pohl T.M."/>
            <person name="Portetelle D."/>
            <person name="Porwollik S."/>
            <person name="Prescott A.M."/>
            <person name="Presecan E."/>
            <person name="Pujic P."/>
            <person name="Purnelle B."/>
            <person name="Rapoport G."/>
            <person name="Rey M."/>
            <person name="Reynolds S."/>
            <person name="Rieger M."/>
            <person name="Rivolta C."/>
            <person name="Rocha E."/>
            <person name="Roche B."/>
            <person name="Rose M."/>
            <person name="Sadaie Y."/>
            <person name="Sato T."/>
            <person name="Scanlan E."/>
            <person name="Schleich S."/>
            <person name="Schroeter R."/>
            <person name="Scoffone F."/>
            <person name="Sekiguchi J."/>
            <person name="Sekowska A."/>
            <person name="Seror S.J."/>
            <person name="Serror P."/>
            <person name="Shin B.-S."/>
            <person name="Soldo B."/>
            <person name="Sorokin A."/>
            <person name="Tacconi E."/>
            <person name="Takagi T."/>
            <person name="Takahashi H."/>
            <person name="Takemaru K."/>
            <person name="Takeuchi M."/>
            <person name="Tamakoshi A."/>
            <person name="Tanaka T."/>
            <person name="Terpstra P."/>
            <person name="Tognoni A."/>
            <person name="Tosato V."/>
            <person name="Uchiyama S."/>
            <person name="Vandenbol M."/>
            <person name="Vannier F."/>
            <person name="Vassarotti A."/>
            <person name="Viari A."/>
            <person name="Wambutt R."/>
            <person name="Wedler E."/>
            <person name="Wedler H."/>
            <person name="Weitzenegger T."/>
            <person name="Winters P."/>
            <person name="Wipat A."/>
            <person name="Yamamoto H."/>
            <person name="Yamane K."/>
            <person name="Yasumoto K."/>
            <person name="Yata K."/>
            <person name="Yoshida K."/>
            <person name="Yoshikawa H.-F."/>
            <person name="Zumstein E."/>
            <person name="Yoshikawa H."/>
            <person name="Danchin A."/>
        </authorList>
    </citation>
    <scope>NUCLEOTIDE SEQUENCE [LARGE SCALE GENOMIC DNA]</scope>
    <source>
        <strain>168</strain>
    </source>
</reference>
<accession>P94359</accession>
<accession>Q794X8</accession>
<dbReference type="EMBL" id="D83026">
    <property type="protein sequence ID" value="BAA11722.1"/>
    <property type="molecule type" value="Genomic_DNA"/>
</dbReference>
<dbReference type="EMBL" id="AL009126">
    <property type="protein sequence ID" value="CAB15908.1"/>
    <property type="molecule type" value="Genomic_DNA"/>
</dbReference>
<dbReference type="PIR" id="H70080">
    <property type="entry name" value="H70080"/>
</dbReference>
<dbReference type="RefSeq" id="NP_391761.1">
    <property type="nucleotide sequence ID" value="NC_000964.3"/>
</dbReference>
<dbReference type="RefSeq" id="WP_003242549.1">
    <property type="nucleotide sequence ID" value="NZ_OZ025638.1"/>
</dbReference>
<dbReference type="SMR" id="P94359"/>
<dbReference type="FunCoup" id="P94359">
    <property type="interactions" value="94"/>
</dbReference>
<dbReference type="STRING" id="224308.BSU38820"/>
<dbReference type="PaxDb" id="224308-BSU38820"/>
<dbReference type="EnsemblBacteria" id="CAB15908">
    <property type="protein sequence ID" value="CAB15908"/>
    <property type="gene ID" value="BSU_38820"/>
</dbReference>
<dbReference type="GeneID" id="937413"/>
<dbReference type="KEGG" id="bsu:BSU38820"/>
<dbReference type="PATRIC" id="fig|224308.179.peg.4201"/>
<dbReference type="eggNOG" id="COG2508">
    <property type="taxonomic scope" value="Bacteria"/>
</dbReference>
<dbReference type="InParanoid" id="P94359"/>
<dbReference type="OrthoDB" id="9792148at2"/>
<dbReference type="PhylomeDB" id="P94359"/>
<dbReference type="BioCyc" id="BSUB:BSU38820-MONOMER"/>
<dbReference type="Proteomes" id="UP000001570">
    <property type="component" value="Chromosome"/>
</dbReference>
<dbReference type="GO" id="GO:0003700">
    <property type="term" value="F:DNA-binding transcription factor activity"/>
    <property type="evidence" value="ECO:0000318"/>
    <property type="project" value="GO_Central"/>
</dbReference>
<dbReference type="GO" id="GO:0045893">
    <property type="term" value="P:positive regulation of DNA-templated transcription"/>
    <property type="evidence" value="ECO:0000318"/>
    <property type="project" value="GO_Central"/>
</dbReference>
<dbReference type="Gene3D" id="1.10.10.2840">
    <property type="entry name" value="PucR C-terminal helix-turn-helix domain"/>
    <property type="match status" value="1"/>
</dbReference>
<dbReference type="InterPro" id="IPR051448">
    <property type="entry name" value="CdaR-like_regulators"/>
</dbReference>
<dbReference type="InterPro" id="IPR025736">
    <property type="entry name" value="PucR_C-HTH_dom"/>
</dbReference>
<dbReference type="InterPro" id="IPR042070">
    <property type="entry name" value="PucR_C-HTH_sf"/>
</dbReference>
<dbReference type="PANTHER" id="PTHR33744">
    <property type="entry name" value="CARBOHYDRATE DIACID REGULATOR"/>
    <property type="match status" value="1"/>
</dbReference>
<dbReference type="PANTHER" id="PTHR33744:SF15">
    <property type="entry name" value="CARBOHYDRATE DIACID REGULATOR"/>
    <property type="match status" value="1"/>
</dbReference>
<dbReference type="Pfam" id="PF13556">
    <property type="entry name" value="HTH_30"/>
    <property type="match status" value="1"/>
</dbReference>